<sequence length="186" mass="21214">MKPVAPRSFFAMDFLEFITAWEGKWLSQRTNYSFEQNEAGNAKSDVTVQRWDSQTELGRSLLERAGLKNQGELILLQLSWDNSVDWGKSKQKGTIYYGFLPDADHGDRGQLWRGTTNSNLAFLRGDYHLGSDECLTLNLGDGETSLTERHWYASPNLRLRTSLIQQGEGYSHSAFYSDIRRLPPAE</sequence>
<dbReference type="EC" id="4.-.-.-" evidence="1"/>
<dbReference type="EMBL" id="BA000022">
    <property type="protein sequence ID" value="BAA17796.1"/>
    <property type="molecule type" value="Genomic_DNA"/>
</dbReference>
<dbReference type="PIR" id="S74835">
    <property type="entry name" value="S74835"/>
</dbReference>
<dbReference type="SMR" id="P73747"/>
<dbReference type="IntAct" id="P73747">
    <property type="interactions" value="1"/>
</dbReference>
<dbReference type="STRING" id="1148.gene:10498664"/>
<dbReference type="PaxDb" id="1148-1652878"/>
<dbReference type="EnsemblBacteria" id="BAA17796">
    <property type="protein sequence ID" value="BAA17796"/>
    <property type="gene ID" value="BAA17796"/>
</dbReference>
<dbReference type="KEGG" id="syn:sll0853"/>
<dbReference type="eggNOG" id="ENOG50337PI">
    <property type="taxonomic scope" value="Bacteria"/>
</dbReference>
<dbReference type="InParanoid" id="P73747"/>
<dbReference type="PhylomeDB" id="P73747"/>
<dbReference type="Proteomes" id="UP000001425">
    <property type="component" value="Chromosome"/>
</dbReference>
<dbReference type="GO" id="GO:0016829">
    <property type="term" value="F:lyase activity"/>
    <property type="evidence" value="ECO:0007669"/>
    <property type="project" value="UniProtKB-KW"/>
</dbReference>
<dbReference type="CDD" id="cd19433">
    <property type="entry name" value="lipocalin_CpcS-CpeS"/>
    <property type="match status" value="1"/>
</dbReference>
<dbReference type="Gene3D" id="2.40.128.20">
    <property type="match status" value="1"/>
</dbReference>
<dbReference type="HAMAP" id="MF_01459">
    <property type="entry name" value="Chrphore_lyase_CpxS"/>
    <property type="match status" value="1"/>
</dbReference>
<dbReference type="InterPro" id="IPR012674">
    <property type="entry name" value="Calycin"/>
</dbReference>
<dbReference type="InterPro" id="IPR018536">
    <property type="entry name" value="CpcS/CpeS"/>
</dbReference>
<dbReference type="Pfam" id="PF09367">
    <property type="entry name" value="CpeS"/>
    <property type="match status" value="1"/>
</dbReference>
<protein>
    <recommendedName>
        <fullName evidence="1">Chromophore lyase CpcS/CpeS 1</fullName>
        <ecNumber evidence="1">4.-.-.-</ecNumber>
    </recommendedName>
</protein>
<evidence type="ECO:0000255" key="1">
    <source>
        <dbReference type="HAMAP-Rule" id="MF_01459"/>
    </source>
</evidence>
<proteinExistence type="inferred from homology"/>
<accession>P73747</accession>
<keyword id="KW-0456">Lyase</keyword>
<keyword id="KW-1185">Reference proteome</keyword>
<organism>
    <name type="scientific">Synechocystis sp. (strain ATCC 27184 / PCC 6803 / Kazusa)</name>
    <dbReference type="NCBI Taxonomy" id="1111708"/>
    <lineage>
        <taxon>Bacteria</taxon>
        <taxon>Bacillati</taxon>
        <taxon>Cyanobacteriota</taxon>
        <taxon>Cyanophyceae</taxon>
        <taxon>Synechococcales</taxon>
        <taxon>Merismopediaceae</taxon>
        <taxon>Synechocystis</taxon>
    </lineage>
</organism>
<reference key="1">
    <citation type="journal article" date="1996" name="DNA Res.">
        <title>Sequence analysis of the genome of the unicellular cyanobacterium Synechocystis sp. strain PCC6803. II. Sequence determination of the entire genome and assignment of potential protein-coding regions.</title>
        <authorList>
            <person name="Kaneko T."/>
            <person name="Sato S."/>
            <person name="Kotani H."/>
            <person name="Tanaka A."/>
            <person name="Asamizu E."/>
            <person name="Nakamura Y."/>
            <person name="Miyajima N."/>
            <person name="Hirosawa M."/>
            <person name="Sugiura M."/>
            <person name="Sasamoto S."/>
            <person name="Kimura T."/>
            <person name="Hosouchi T."/>
            <person name="Matsuno A."/>
            <person name="Muraki A."/>
            <person name="Nakazaki N."/>
            <person name="Naruo K."/>
            <person name="Okumura S."/>
            <person name="Shimpo S."/>
            <person name="Takeuchi C."/>
            <person name="Wada T."/>
            <person name="Watanabe A."/>
            <person name="Yamada M."/>
            <person name="Yasuda M."/>
            <person name="Tabata S."/>
        </authorList>
    </citation>
    <scope>NUCLEOTIDE SEQUENCE [LARGE SCALE GENOMIC DNA]</scope>
    <source>
        <strain>ATCC 27184 / PCC 6803 / Kazusa</strain>
    </source>
</reference>
<comment type="function">
    <text evidence="1">Covalently attaches a chromophore to Cys residue(s) of phycobiliproteins.</text>
</comment>
<comment type="similarity">
    <text evidence="1">Belongs to the CpcS/CpeS biliprotein lyase family.</text>
</comment>
<feature type="chain" id="PRO_0000403144" description="Chromophore lyase CpcS/CpeS 1">
    <location>
        <begin position="1"/>
        <end position="186"/>
    </location>
</feature>
<name>CPXS1_SYNY3</name>
<gene>
    <name evidence="1" type="primary">cpcS1</name>
    <name type="ordered locus">sll0853</name>
</gene>